<reference key="1">
    <citation type="journal article" date="2009" name="PLoS ONE">
        <title>Genome degradation in Brucella ovis corresponds with narrowing of its host range and tissue tropism.</title>
        <authorList>
            <person name="Tsolis R.M."/>
            <person name="Seshadri R."/>
            <person name="Santos R.L."/>
            <person name="Sangari F.J."/>
            <person name="Lobo J.M."/>
            <person name="de Jong M.F."/>
            <person name="Ren Q."/>
            <person name="Myers G."/>
            <person name="Brinkac L.M."/>
            <person name="Nelson W.C."/>
            <person name="Deboy R.T."/>
            <person name="Angiuoli S."/>
            <person name="Khouri H."/>
            <person name="Dimitrov G."/>
            <person name="Robinson J.R."/>
            <person name="Mulligan S."/>
            <person name="Walker R.L."/>
            <person name="Elzer P.E."/>
            <person name="Hassan K.A."/>
            <person name="Paulsen I.T."/>
        </authorList>
    </citation>
    <scope>NUCLEOTIDE SEQUENCE [LARGE SCALE GENOMIC DNA]</scope>
    <source>
        <strain>ATCC 25840 / 63/290 / NCTC 10512</strain>
    </source>
</reference>
<comment type="similarity">
    <text evidence="1">Belongs to the universal ribosomal protein uS2 family.</text>
</comment>
<protein>
    <recommendedName>
        <fullName evidence="1">Small ribosomal subunit protein uS2</fullName>
    </recommendedName>
    <alternativeName>
        <fullName evidence="2">30S ribosomal protein S2</fullName>
    </alternativeName>
</protein>
<feature type="chain" id="PRO_0000351982" description="Small ribosomal subunit protein uS2">
    <location>
        <begin position="1"/>
        <end position="254"/>
    </location>
</feature>
<gene>
    <name evidence="1" type="primary">rpsB</name>
    <name type="ordered locus">BOV_1119</name>
</gene>
<proteinExistence type="inferred from homology"/>
<evidence type="ECO:0000255" key="1">
    <source>
        <dbReference type="HAMAP-Rule" id="MF_00291"/>
    </source>
</evidence>
<evidence type="ECO:0000305" key="2"/>
<name>RS2_BRUO2</name>
<keyword id="KW-0687">Ribonucleoprotein</keyword>
<keyword id="KW-0689">Ribosomal protein</keyword>
<organism>
    <name type="scientific">Brucella ovis (strain ATCC 25840 / 63/290 / NCTC 10512)</name>
    <dbReference type="NCBI Taxonomy" id="444178"/>
    <lineage>
        <taxon>Bacteria</taxon>
        <taxon>Pseudomonadati</taxon>
        <taxon>Pseudomonadota</taxon>
        <taxon>Alphaproteobacteria</taxon>
        <taxon>Hyphomicrobiales</taxon>
        <taxon>Brucellaceae</taxon>
        <taxon>Brucella/Ochrobactrum group</taxon>
        <taxon>Brucella</taxon>
    </lineage>
</organism>
<sequence>MPDFSMRQLLEAGVHFGHQTHRWNPKMAPFIYGERNNIHILDLSQTVPLLNSALKVVSDTVARGGRVLFVGTKRQASDIIADAANRSAQYYVNARWLGGMMTNWKTISNSIQRLRKLDELLAGEAQGFTKKERLNLEREREKLDRTLGGIKDMGSVPDLMFIIDTNKEAIAIQEAKRLGIPVVAVIDSNCDPDQIDYPIPGNDDAARAIALYCDLIARAALDGIARQQGAMGIDVGAQVEAPVEPALQAPAEGA</sequence>
<accession>A5VQT3</accession>
<dbReference type="EMBL" id="CP000708">
    <property type="protein sequence ID" value="ABQ60068.1"/>
    <property type="molecule type" value="Genomic_DNA"/>
</dbReference>
<dbReference type="SMR" id="A5VQT3"/>
<dbReference type="KEGG" id="bov:BOV_1119"/>
<dbReference type="HOGENOM" id="CLU_040318_2_3_5"/>
<dbReference type="Proteomes" id="UP000006383">
    <property type="component" value="Chromosome I"/>
</dbReference>
<dbReference type="GO" id="GO:0022627">
    <property type="term" value="C:cytosolic small ribosomal subunit"/>
    <property type="evidence" value="ECO:0007669"/>
    <property type="project" value="TreeGrafter"/>
</dbReference>
<dbReference type="GO" id="GO:0003735">
    <property type="term" value="F:structural constituent of ribosome"/>
    <property type="evidence" value="ECO:0007669"/>
    <property type="project" value="InterPro"/>
</dbReference>
<dbReference type="GO" id="GO:0006412">
    <property type="term" value="P:translation"/>
    <property type="evidence" value="ECO:0007669"/>
    <property type="project" value="UniProtKB-UniRule"/>
</dbReference>
<dbReference type="CDD" id="cd01425">
    <property type="entry name" value="RPS2"/>
    <property type="match status" value="1"/>
</dbReference>
<dbReference type="FunFam" id="1.10.287.610:FF:000001">
    <property type="entry name" value="30S ribosomal protein S2"/>
    <property type="match status" value="1"/>
</dbReference>
<dbReference type="Gene3D" id="3.40.50.10490">
    <property type="entry name" value="Glucose-6-phosphate isomerase like protein, domain 1"/>
    <property type="match status" value="1"/>
</dbReference>
<dbReference type="Gene3D" id="1.10.287.610">
    <property type="entry name" value="Helix hairpin bin"/>
    <property type="match status" value="1"/>
</dbReference>
<dbReference type="HAMAP" id="MF_00291_B">
    <property type="entry name" value="Ribosomal_uS2_B"/>
    <property type="match status" value="1"/>
</dbReference>
<dbReference type="InterPro" id="IPR001865">
    <property type="entry name" value="Ribosomal_uS2"/>
</dbReference>
<dbReference type="InterPro" id="IPR005706">
    <property type="entry name" value="Ribosomal_uS2_bac/mit/plastid"/>
</dbReference>
<dbReference type="InterPro" id="IPR018130">
    <property type="entry name" value="Ribosomal_uS2_CS"/>
</dbReference>
<dbReference type="InterPro" id="IPR023591">
    <property type="entry name" value="Ribosomal_uS2_flav_dom_sf"/>
</dbReference>
<dbReference type="NCBIfam" id="TIGR01011">
    <property type="entry name" value="rpsB_bact"/>
    <property type="match status" value="1"/>
</dbReference>
<dbReference type="PANTHER" id="PTHR12534">
    <property type="entry name" value="30S RIBOSOMAL PROTEIN S2 PROKARYOTIC AND ORGANELLAR"/>
    <property type="match status" value="1"/>
</dbReference>
<dbReference type="PANTHER" id="PTHR12534:SF0">
    <property type="entry name" value="SMALL RIBOSOMAL SUBUNIT PROTEIN US2M"/>
    <property type="match status" value="1"/>
</dbReference>
<dbReference type="Pfam" id="PF00318">
    <property type="entry name" value="Ribosomal_S2"/>
    <property type="match status" value="1"/>
</dbReference>
<dbReference type="PRINTS" id="PR00395">
    <property type="entry name" value="RIBOSOMALS2"/>
</dbReference>
<dbReference type="SUPFAM" id="SSF52313">
    <property type="entry name" value="Ribosomal protein S2"/>
    <property type="match status" value="1"/>
</dbReference>
<dbReference type="PROSITE" id="PS00962">
    <property type="entry name" value="RIBOSOMAL_S2_1"/>
    <property type="match status" value="1"/>
</dbReference>
<dbReference type="PROSITE" id="PS00963">
    <property type="entry name" value="RIBOSOMAL_S2_2"/>
    <property type="match status" value="1"/>
</dbReference>